<name>H1_PSAMI</name>
<evidence type="ECO:0000255" key="1">
    <source>
        <dbReference type="PROSITE-ProRule" id="PRU00837"/>
    </source>
</evidence>
<evidence type="ECO:0000256" key="2">
    <source>
        <dbReference type="SAM" id="MobiDB-lite"/>
    </source>
</evidence>
<reference key="1">
    <citation type="journal article" date="1979" name="Proc. Alfred Benzon Symp.">
        <title>Functional organization of the histone genes in the sea urchin Psammechinus: a progress report.</title>
        <authorList>
            <person name="Birnstiel M.L."/>
            <person name="Portmann R."/>
            <person name="Busslinger M."/>
            <person name="Schaffner W."/>
            <person name="Probst E."/>
            <person name="Kressmann A."/>
        </authorList>
    </citation>
    <scope>NUCLEOTIDE SEQUENCE [GENOMIC DNA]</scope>
</reference>
<organism>
    <name type="scientific">Psammechinus miliaris</name>
    <name type="common">Green sea urchin</name>
    <name type="synonym">Echinus miliaris</name>
    <dbReference type="NCBI Taxonomy" id="7660"/>
    <lineage>
        <taxon>Eukaryota</taxon>
        <taxon>Metazoa</taxon>
        <taxon>Echinodermata</taxon>
        <taxon>Eleutherozoa</taxon>
        <taxon>Echinozoa</taxon>
        <taxon>Echinoidea</taxon>
        <taxon>Euechinoidea</taxon>
        <taxon>Echinacea</taxon>
        <taxon>Camarodonta</taxon>
        <taxon>Echinidea</taxon>
        <taxon>Parechinidae</taxon>
        <taxon>Psammechinus</taxon>
    </lineage>
</organism>
<dbReference type="EMBL" id="V01144">
    <property type="protein sequence ID" value="CAA24379.1"/>
    <property type="status" value="ALT_SEQ"/>
    <property type="molecule type" value="Genomic_DNA"/>
</dbReference>
<dbReference type="GO" id="GO:0000786">
    <property type="term" value="C:nucleosome"/>
    <property type="evidence" value="ECO:0007669"/>
    <property type="project" value="InterPro"/>
</dbReference>
<dbReference type="GO" id="GO:0005634">
    <property type="term" value="C:nucleus"/>
    <property type="evidence" value="ECO:0007669"/>
    <property type="project" value="UniProtKB-SubCell"/>
</dbReference>
<dbReference type="GO" id="GO:0003690">
    <property type="term" value="F:double-stranded DNA binding"/>
    <property type="evidence" value="ECO:0007669"/>
    <property type="project" value="TreeGrafter"/>
</dbReference>
<dbReference type="GO" id="GO:0031492">
    <property type="term" value="F:nucleosomal DNA binding"/>
    <property type="evidence" value="ECO:0007669"/>
    <property type="project" value="TreeGrafter"/>
</dbReference>
<dbReference type="GO" id="GO:0030527">
    <property type="term" value="F:structural constituent of chromatin"/>
    <property type="evidence" value="ECO:0007669"/>
    <property type="project" value="InterPro"/>
</dbReference>
<dbReference type="GO" id="GO:0030261">
    <property type="term" value="P:chromosome condensation"/>
    <property type="evidence" value="ECO:0007669"/>
    <property type="project" value="TreeGrafter"/>
</dbReference>
<dbReference type="GO" id="GO:0045910">
    <property type="term" value="P:negative regulation of DNA recombination"/>
    <property type="evidence" value="ECO:0007669"/>
    <property type="project" value="TreeGrafter"/>
</dbReference>
<dbReference type="GO" id="GO:0006334">
    <property type="term" value="P:nucleosome assembly"/>
    <property type="evidence" value="ECO:0007669"/>
    <property type="project" value="InterPro"/>
</dbReference>
<dbReference type="CDD" id="cd00073">
    <property type="entry name" value="H15"/>
    <property type="match status" value="1"/>
</dbReference>
<dbReference type="Gene3D" id="1.10.10.10">
    <property type="entry name" value="Winged helix-like DNA-binding domain superfamily/Winged helix DNA-binding domain"/>
    <property type="match status" value="1"/>
</dbReference>
<dbReference type="InterPro" id="IPR005819">
    <property type="entry name" value="H1/H5"/>
</dbReference>
<dbReference type="InterPro" id="IPR005818">
    <property type="entry name" value="Histone_H1/H5_H15"/>
</dbReference>
<dbReference type="InterPro" id="IPR036388">
    <property type="entry name" value="WH-like_DNA-bd_sf"/>
</dbReference>
<dbReference type="InterPro" id="IPR036390">
    <property type="entry name" value="WH_DNA-bd_sf"/>
</dbReference>
<dbReference type="PANTHER" id="PTHR11467">
    <property type="entry name" value="HISTONE H1"/>
    <property type="match status" value="1"/>
</dbReference>
<dbReference type="PANTHER" id="PTHR11467:SF177">
    <property type="entry name" value="HISTONE H1, EARLY EMBRYONIC"/>
    <property type="match status" value="1"/>
</dbReference>
<dbReference type="Pfam" id="PF00538">
    <property type="entry name" value="Linker_histone"/>
    <property type="match status" value="1"/>
</dbReference>
<dbReference type="PRINTS" id="PR00624">
    <property type="entry name" value="HISTONEH5"/>
</dbReference>
<dbReference type="SMART" id="SM00526">
    <property type="entry name" value="H15"/>
    <property type="match status" value="1"/>
</dbReference>
<dbReference type="SUPFAM" id="SSF46785">
    <property type="entry name" value="Winged helix' DNA-binding domain"/>
    <property type="match status" value="1"/>
</dbReference>
<dbReference type="PROSITE" id="PS51504">
    <property type="entry name" value="H15"/>
    <property type="match status" value="1"/>
</dbReference>
<sequence>MAEKESSKKVTTKKPAATHRRRDGCNSITELKDRNGSSLQAIKKYIATNFDVQMDRQLLFIKRALKSGVEKGKLVQTKGKGAECAGGQGTGVGEGKKEKEKAKLLAQREKARKGXXXXXXXXXXXXXXXXXAAKKVKAAPKKAKKPVKKTTEKKEKKKS</sequence>
<feature type="chain" id="PRO_0000195943" description="Histone H1">
    <location>
        <begin position="1"/>
        <end position="159" status="greater than"/>
    </location>
</feature>
<feature type="domain" description="H15" evidence="1">
    <location>
        <begin position="12"/>
        <end position="102"/>
    </location>
</feature>
<feature type="region of interest" description="Disordered" evidence="2">
    <location>
        <begin position="1"/>
        <end position="31"/>
    </location>
</feature>
<feature type="region of interest" description="Disordered" evidence="2">
    <location>
        <begin position="80"/>
        <end position="99"/>
    </location>
</feature>
<feature type="region of interest" description="Disordered" evidence="2">
    <location>
        <begin position="132"/>
        <end position="159"/>
    </location>
</feature>
<feature type="compositionally biased region" description="Basic residues" evidence="2">
    <location>
        <begin position="10"/>
        <end position="22"/>
    </location>
</feature>
<feature type="compositionally biased region" description="Gly residues" evidence="2">
    <location>
        <begin position="84"/>
        <end position="93"/>
    </location>
</feature>
<feature type="compositionally biased region" description="Basic residues" evidence="2">
    <location>
        <begin position="134"/>
        <end position="148"/>
    </location>
</feature>
<feature type="compositionally biased region" description="Basic and acidic residues" evidence="2">
    <location>
        <begin position="149"/>
        <end position="159"/>
    </location>
</feature>
<feature type="non-terminal residue">
    <location>
        <position position="159"/>
    </location>
</feature>
<accession>P15868</accession>
<keyword id="KW-0158">Chromosome</keyword>
<keyword id="KW-0238">DNA-binding</keyword>
<keyword id="KW-0539">Nucleus</keyword>
<proteinExistence type="inferred from homology"/>
<protein>
    <recommendedName>
        <fullName>Histone H1</fullName>
    </recommendedName>
</protein>
<comment type="function">
    <text>Histones H1 are necessary for the condensation of nucleosome chains into higher-order structures.</text>
</comment>
<comment type="subcellular location">
    <subcellularLocation>
        <location>Nucleus</location>
    </subcellularLocation>
    <subcellularLocation>
        <location>Chromosome</location>
    </subcellularLocation>
</comment>
<comment type="similarity">
    <text evidence="1">Belongs to the histone H1/H5 family.</text>
</comment>